<name>CMOB_SALPK</name>
<accession>B5BH49</accession>
<comment type="function">
    <text evidence="1">Catalyzes carboxymethyl transfer from carboxy-S-adenosyl-L-methionine (Cx-SAM) to 5-hydroxyuridine (ho5U) to form 5-carboxymethoxyuridine (cmo5U) at position 34 in tRNAs.</text>
</comment>
<comment type="catalytic activity">
    <reaction evidence="1">
        <text>carboxy-S-adenosyl-L-methionine + 5-hydroxyuridine(34) in tRNA = 5-carboxymethoxyuridine(34) in tRNA + S-adenosyl-L-homocysteine + H(+)</text>
        <dbReference type="Rhea" id="RHEA:52848"/>
        <dbReference type="Rhea" id="RHEA-COMP:13381"/>
        <dbReference type="Rhea" id="RHEA-COMP:13383"/>
        <dbReference type="ChEBI" id="CHEBI:15378"/>
        <dbReference type="ChEBI" id="CHEBI:57856"/>
        <dbReference type="ChEBI" id="CHEBI:134278"/>
        <dbReference type="ChEBI" id="CHEBI:136877"/>
        <dbReference type="ChEBI" id="CHEBI:136879"/>
    </reaction>
</comment>
<comment type="subunit">
    <text evidence="1">Homotetramer.</text>
</comment>
<comment type="similarity">
    <text evidence="1">Belongs to the class I-like SAM-binding methyltransferase superfamily. CmoB family.</text>
</comment>
<sequence length="323" mass="37055">MIEFGNFYQLIAKNHLSHWLETLPAQIAAWQREQQHGLFKQWSNAVEFLPEITPWRLDLLHSVTAESETPLSEGQLKRIDTLLRNLMPWRKGPFSLYGVDIDTEWRSDWKWDRVLPHLSDLTGRTILDVGCGSGYHLWRMIGAGAHLAVGIDPTQLFLCQFEAVRKLLGNDQRAHLLPLGIEQLPALKAFDTVFSMGVLYHRRSPLEHLWQLKDQLVNEGELVLETLVVDGDENTVLVPGDRYAQMRNVYFIPSAPALKKWLEKCGFVDVRIADVCVTTTEEQCRTEWMVTESLADFLDPNDRSKTVEGYPAPQRAVLIARKR</sequence>
<evidence type="ECO:0000255" key="1">
    <source>
        <dbReference type="HAMAP-Rule" id="MF_01590"/>
    </source>
</evidence>
<dbReference type="EC" id="2.5.1.-" evidence="1"/>
<dbReference type="EMBL" id="FM200053">
    <property type="protein sequence ID" value="CAR59041.1"/>
    <property type="molecule type" value="Genomic_DNA"/>
</dbReference>
<dbReference type="RefSeq" id="WP_000569028.1">
    <property type="nucleotide sequence ID" value="NC_011147.1"/>
</dbReference>
<dbReference type="SMR" id="B5BH49"/>
<dbReference type="KEGG" id="sek:SSPA0897"/>
<dbReference type="HOGENOM" id="CLU_052665_0_0_6"/>
<dbReference type="Proteomes" id="UP000001869">
    <property type="component" value="Chromosome"/>
</dbReference>
<dbReference type="GO" id="GO:0008168">
    <property type="term" value="F:methyltransferase activity"/>
    <property type="evidence" value="ECO:0007669"/>
    <property type="project" value="TreeGrafter"/>
</dbReference>
<dbReference type="GO" id="GO:0016765">
    <property type="term" value="F:transferase activity, transferring alkyl or aryl (other than methyl) groups"/>
    <property type="evidence" value="ECO:0007669"/>
    <property type="project" value="UniProtKB-UniRule"/>
</dbReference>
<dbReference type="GO" id="GO:0002098">
    <property type="term" value="P:tRNA wobble uridine modification"/>
    <property type="evidence" value="ECO:0007669"/>
    <property type="project" value="InterPro"/>
</dbReference>
<dbReference type="CDD" id="cd02440">
    <property type="entry name" value="AdoMet_MTases"/>
    <property type="match status" value="1"/>
</dbReference>
<dbReference type="FunFam" id="3.40.50.150:FF:000080">
    <property type="entry name" value="tRNA U34 carboxymethyltransferase"/>
    <property type="match status" value="1"/>
</dbReference>
<dbReference type="Gene3D" id="3.40.50.150">
    <property type="entry name" value="Vaccinia Virus protein VP39"/>
    <property type="match status" value="1"/>
</dbReference>
<dbReference type="HAMAP" id="MF_01590">
    <property type="entry name" value="tRNA_carboxymethyltr_CmoB"/>
    <property type="match status" value="1"/>
</dbReference>
<dbReference type="InterPro" id="IPR010017">
    <property type="entry name" value="CmoB"/>
</dbReference>
<dbReference type="InterPro" id="IPR027555">
    <property type="entry name" value="Mo5U34_MeTrfas-like"/>
</dbReference>
<dbReference type="InterPro" id="IPR029063">
    <property type="entry name" value="SAM-dependent_MTases_sf"/>
</dbReference>
<dbReference type="NCBIfam" id="NF011650">
    <property type="entry name" value="PRK15068.1"/>
    <property type="match status" value="1"/>
</dbReference>
<dbReference type="NCBIfam" id="TIGR00452">
    <property type="entry name" value="tRNA 5-methoxyuridine(34)/uridine 5-oxyacetic acid(34) synthase CmoB"/>
    <property type="match status" value="1"/>
</dbReference>
<dbReference type="PANTHER" id="PTHR43464">
    <property type="entry name" value="METHYLTRANSFERASE"/>
    <property type="match status" value="1"/>
</dbReference>
<dbReference type="PANTHER" id="PTHR43464:SF95">
    <property type="entry name" value="TRNA U34 CARBOXYMETHYLTRANSFERASE"/>
    <property type="match status" value="1"/>
</dbReference>
<dbReference type="Pfam" id="PF08003">
    <property type="entry name" value="Methyltransf_9"/>
    <property type="match status" value="1"/>
</dbReference>
<dbReference type="SUPFAM" id="SSF53335">
    <property type="entry name" value="S-adenosyl-L-methionine-dependent methyltransferases"/>
    <property type="match status" value="1"/>
</dbReference>
<gene>
    <name evidence="1" type="primary">cmoB</name>
    <name type="ordered locus">SSPA0897</name>
</gene>
<feature type="chain" id="PRO_1000201310" description="tRNA U34 carboxymethyltransferase">
    <location>
        <begin position="1"/>
        <end position="323"/>
    </location>
</feature>
<feature type="binding site" evidence="1">
    <location>
        <position position="91"/>
    </location>
    <ligand>
        <name>carboxy-S-adenosyl-L-methionine</name>
        <dbReference type="ChEBI" id="CHEBI:134278"/>
    </ligand>
</feature>
<feature type="binding site" evidence="1">
    <location>
        <position position="105"/>
    </location>
    <ligand>
        <name>carboxy-S-adenosyl-L-methionine</name>
        <dbReference type="ChEBI" id="CHEBI:134278"/>
    </ligand>
</feature>
<feature type="binding site" evidence="1">
    <location>
        <position position="110"/>
    </location>
    <ligand>
        <name>carboxy-S-adenosyl-L-methionine</name>
        <dbReference type="ChEBI" id="CHEBI:134278"/>
    </ligand>
</feature>
<feature type="binding site" evidence="1">
    <location>
        <position position="130"/>
    </location>
    <ligand>
        <name>carboxy-S-adenosyl-L-methionine</name>
        <dbReference type="ChEBI" id="CHEBI:134278"/>
    </ligand>
</feature>
<feature type="binding site" evidence="1">
    <location>
        <begin position="152"/>
        <end position="154"/>
    </location>
    <ligand>
        <name>carboxy-S-adenosyl-L-methionine</name>
        <dbReference type="ChEBI" id="CHEBI:134278"/>
    </ligand>
</feature>
<feature type="binding site" evidence="1">
    <location>
        <begin position="181"/>
        <end position="182"/>
    </location>
    <ligand>
        <name>carboxy-S-adenosyl-L-methionine</name>
        <dbReference type="ChEBI" id="CHEBI:134278"/>
    </ligand>
</feature>
<feature type="binding site" evidence="1">
    <location>
        <position position="196"/>
    </location>
    <ligand>
        <name>carboxy-S-adenosyl-L-methionine</name>
        <dbReference type="ChEBI" id="CHEBI:134278"/>
    </ligand>
</feature>
<feature type="binding site" evidence="1">
    <location>
        <position position="200"/>
    </location>
    <ligand>
        <name>carboxy-S-adenosyl-L-methionine</name>
        <dbReference type="ChEBI" id="CHEBI:134278"/>
    </ligand>
</feature>
<feature type="binding site" evidence="1">
    <location>
        <position position="315"/>
    </location>
    <ligand>
        <name>carboxy-S-adenosyl-L-methionine</name>
        <dbReference type="ChEBI" id="CHEBI:134278"/>
    </ligand>
</feature>
<protein>
    <recommendedName>
        <fullName evidence="1">tRNA U34 carboxymethyltransferase</fullName>
        <ecNumber evidence="1">2.5.1.-</ecNumber>
    </recommendedName>
</protein>
<reference key="1">
    <citation type="journal article" date="2009" name="BMC Genomics">
        <title>Pseudogene accumulation in the evolutionary histories of Salmonella enterica serovars Paratyphi A and Typhi.</title>
        <authorList>
            <person name="Holt K.E."/>
            <person name="Thomson N.R."/>
            <person name="Wain J."/>
            <person name="Langridge G.C."/>
            <person name="Hasan R."/>
            <person name="Bhutta Z.A."/>
            <person name="Quail M.A."/>
            <person name="Norbertczak H."/>
            <person name="Walker D."/>
            <person name="Simmonds M."/>
            <person name="White B."/>
            <person name="Bason N."/>
            <person name="Mungall K."/>
            <person name="Dougan G."/>
            <person name="Parkhill J."/>
        </authorList>
    </citation>
    <scope>NUCLEOTIDE SEQUENCE [LARGE SCALE GENOMIC DNA]</scope>
    <source>
        <strain>AKU_12601</strain>
    </source>
</reference>
<keyword id="KW-0808">Transferase</keyword>
<keyword id="KW-0819">tRNA processing</keyword>
<proteinExistence type="inferred from homology"/>
<organism>
    <name type="scientific">Salmonella paratyphi A (strain AKU_12601)</name>
    <dbReference type="NCBI Taxonomy" id="554290"/>
    <lineage>
        <taxon>Bacteria</taxon>
        <taxon>Pseudomonadati</taxon>
        <taxon>Pseudomonadota</taxon>
        <taxon>Gammaproteobacteria</taxon>
        <taxon>Enterobacterales</taxon>
        <taxon>Enterobacteriaceae</taxon>
        <taxon>Salmonella</taxon>
    </lineage>
</organism>